<evidence type="ECO:0000256" key="1">
    <source>
        <dbReference type="SAM" id="MobiDB-lite"/>
    </source>
</evidence>
<evidence type="ECO:0000269" key="2">
    <source>
    </source>
</evidence>
<evidence type="ECO:0000269" key="3">
    <source>
    </source>
</evidence>
<evidence type="ECO:0000269" key="4">
    <source>
    </source>
</evidence>
<evidence type="ECO:0000303" key="5">
    <source>
    </source>
</evidence>
<evidence type="ECO:0000305" key="6"/>
<evidence type="ECO:0007829" key="7">
    <source>
        <dbReference type="PDB" id="1JFI"/>
    </source>
</evidence>
<feature type="initiator methionine" description="Removed" evidence="4">
    <location>
        <position position="1"/>
    </location>
</feature>
<feature type="chain" id="PRO_0000080001" description="Dr1-associated corepressor">
    <location>
        <begin position="2"/>
        <end position="205"/>
    </location>
</feature>
<feature type="domain" description="Histone-fold">
    <location>
        <begin position="14"/>
        <end position="77"/>
    </location>
</feature>
<feature type="region of interest" description="Disordered" evidence="1">
    <location>
        <begin position="91"/>
        <end position="205"/>
    </location>
</feature>
<feature type="compositionally biased region" description="Basic and acidic residues" evidence="1">
    <location>
        <begin position="98"/>
        <end position="108"/>
    </location>
</feature>
<feature type="compositionally biased region" description="Gly residues" evidence="1">
    <location>
        <begin position="114"/>
        <end position="125"/>
    </location>
</feature>
<feature type="compositionally biased region" description="Acidic residues" evidence="1">
    <location>
        <begin position="138"/>
        <end position="155"/>
    </location>
</feature>
<feature type="compositionally biased region" description="Pro residues" evidence="1">
    <location>
        <begin position="184"/>
        <end position="193"/>
    </location>
</feature>
<feature type="compositionally biased region" description="Acidic residues" evidence="1">
    <location>
        <begin position="195"/>
        <end position="205"/>
    </location>
</feature>
<feature type="splice variant" id="VSP_012215" description="In isoform 2." evidence="5">
    <original>G</original>
    <variation>WTVPSQR</variation>
    <location>
        <position position="111"/>
    </location>
</feature>
<feature type="sequence conflict" description="In Ref. 2; AA sequence." evidence="6" ref="2">
    <original>PSKKKKYNARFPPA</original>
    <variation>EF</variation>
    <location>
        <begin position="2"/>
        <end position="15"/>
    </location>
</feature>
<feature type="helix" evidence="7">
    <location>
        <begin position="14"/>
        <end position="21"/>
    </location>
</feature>
<feature type="helix" evidence="7">
    <location>
        <begin position="34"/>
        <end position="58"/>
    </location>
</feature>
<feature type="helix" evidence="7">
    <location>
        <begin position="67"/>
        <end position="71"/>
    </location>
</feature>
<keyword id="KW-0002">3D-structure</keyword>
<keyword id="KW-0025">Alternative splicing</keyword>
<keyword id="KW-0903">Direct protein sequencing</keyword>
<keyword id="KW-0238">DNA-binding</keyword>
<keyword id="KW-0539">Nucleus</keyword>
<keyword id="KW-0597">Phosphoprotein</keyword>
<keyword id="KW-1267">Proteomics identification</keyword>
<keyword id="KW-1185">Reference proteome</keyword>
<keyword id="KW-0678">Repressor</keyword>
<keyword id="KW-0804">Transcription</keyword>
<keyword id="KW-0805">Transcription regulation</keyword>
<comment type="function">
    <text evidence="3 4">The association of the DR1/DRAP1 heterodimer with TBP results in a functional repression of both activated and basal transcription of class II genes. This interaction precludes the formation of a transcription-competent complex by inhibiting the association of TFIIA and/or TFIIB with TBP. Can bind to DNA on its own.</text>
</comment>
<comment type="subunit">
    <text evidence="2">Heterodimer with DR1. Binds BTAF1.</text>
</comment>
<comment type="interaction">
    <interactant intactId="EBI-712941">
        <id>Q14919</id>
    </interactant>
    <interactant intactId="EBI-750300">
        <id>Q01658</id>
        <label>DR1</label>
    </interactant>
    <organismsDiffer>false</organismsDiffer>
    <experiments>49</experiments>
</comment>
<comment type="interaction">
    <interactant intactId="EBI-712941">
        <id>Q14919</id>
    </interactant>
    <interactant intactId="EBI-712941">
        <id>Q14919</id>
        <label>DRAP1</label>
    </interactant>
    <organismsDiffer>false</organismsDiffer>
    <experiments>3</experiments>
</comment>
<comment type="interaction">
    <interactant intactId="EBI-712941">
        <id>Q14919</id>
    </interactant>
    <interactant intactId="EBI-389564">
        <id>Q00403</id>
        <label>GTF2B</label>
    </interactant>
    <organismsDiffer>false</organismsDiffer>
    <experiments>6</experiments>
</comment>
<comment type="interaction">
    <interactant intactId="EBI-712941">
        <id>Q14919</id>
    </interactant>
    <interactant intactId="EBI-739696">
        <id>P25791</id>
        <label>LMO2</label>
    </interactant>
    <organismsDiffer>false</organismsDiffer>
    <experiments>3</experiments>
</comment>
<comment type="interaction">
    <interactant intactId="EBI-712941">
        <id>Q14919</id>
    </interactant>
    <interactant intactId="EBI-11959475">
        <id>P25791-3</id>
        <label>LMO2</label>
    </interactant>
    <organismsDiffer>false</organismsDiffer>
    <experiments>3</experiments>
</comment>
<comment type="interaction">
    <interactant intactId="EBI-712941">
        <id>Q14919</id>
    </interactant>
    <interactant intactId="EBI-739832">
        <id>Q8TBB1</id>
        <label>LNX1</label>
    </interactant>
    <organismsDiffer>false</organismsDiffer>
    <experiments>3</experiments>
</comment>
<comment type="interaction">
    <interactant intactId="EBI-712941">
        <id>Q14919</id>
    </interactant>
    <interactant intactId="EBI-348259">
        <id>Q96EZ8</id>
        <label>MCRS1</label>
    </interactant>
    <organismsDiffer>false</organismsDiffer>
    <experiments>3</experiments>
</comment>
<comment type="interaction">
    <interactant intactId="EBI-712941">
        <id>Q14919</id>
    </interactant>
    <interactant intactId="EBI-10288852">
        <id>Q9UBU8-2</id>
        <label>MORF4L1</label>
    </interactant>
    <organismsDiffer>false</organismsDiffer>
    <experiments>3</experiments>
</comment>
<comment type="interaction">
    <interactant intactId="EBI-712941">
        <id>Q14919</id>
    </interactant>
    <interactant intactId="EBI-713635">
        <id>O43639</id>
        <label>NCK2</label>
    </interactant>
    <organismsDiffer>false</organismsDiffer>
    <experiments>3</experiments>
</comment>
<comment type="interaction">
    <interactant intactId="EBI-712941">
        <id>Q14919</id>
    </interactant>
    <interactant intactId="EBI-389728">
        <id>P25208</id>
        <label>NFYB</label>
    </interactant>
    <organismsDiffer>false</organismsDiffer>
    <experiments>4</experiments>
</comment>
<comment type="interaction">
    <interactant intactId="EBI-712941">
        <id>Q14919</id>
    </interactant>
    <interactant intactId="EBI-79165">
        <id>Q9NRD5</id>
        <label>PICK1</label>
    </interactant>
    <organismsDiffer>false</organismsDiffer>
    <experiments>3</experiments>
</comment>
<comment type="interaction">
    <interactant intactId="EBI-712941">
        <id>Q14919</id>
    </interactant>
    <interactant intactId="EBI-79893">
        <id>Q92569</id>
        <label>PIK3R3</label>
    </interactant>
    <organismsDiffer>false</organismsDiffer>
    <experiments>4</experiments>
</comment>
<comment type="interaction">
    <interactant intactId="EBI-712941">
        <id>Q14919</id>
    </interactant>
    <interactant intactId="EBI-744901">
        <id>Q9NRF9</id>
        <label>POLE3</label>
    </interactant>
    <organismsDiffer>false</organismsDiffer>
    <experiments>8</experiments>
</comment>
<comment type="interaction">
    <interactant intactId="EBI-712941">
        <id>Q14919</id>
    </interactant>
    <interactant intactId="EBI-358122">
        <id>P32969</id>
        <label>RPL9P9</label>
    </interactant>
    <organismsDiffer>false</organismsDiffer>
    <experiments>3</experiments>
</comment>
<comment type="interaction">
    <interactant intactId="EBI-712941">
        <id>Q14919</id>
    </interactant>
    <interactant intactId="EBI-727004">
        <id>O00560</id>
        <label>SDCBP</label>
    </interactant>
    <organismsDiffer>false</organismsDiffer>
    <experiments>5</experiments>
</comment>
<comment type="interaction">
    <interactant intactId="EBI-712941">
        <id>Q14919</id>
    </interactant>
    <interactant intactId="EBI-712521">
        <id>Q16594</id>
        <label>TAF9</label>
    </interactant>
    <organismsDiffer>false</organismsDiffer>
    <experiments>9</experiments>
</comment>
<comment type="interaction">
    <interactant intactId="EBI-712941">
        <id>Q14919</id>
    </interactant>
    <interactant intactId="EBI-751601">
        <id>Q9HBM6</id>
        <label>TAF9B</label>
    </interactant>
    <organismsDiffer>false</organismsDiffer>
    <experiments>7</experiments>
</comment>
<comment type="subcellular location">
    <subcellularLocation>
        <location evidence="6">Nucleus</location>
    </subcellularLocation>
</comment>
<comment type="alternative products">
    <event type="alternative splicing"/>
    <isoform>
        <id>Q14919-1</id>
        <name>1</name>
        <sequence type="displayed"/>
    </isoform>
    <isoform>
        <id>Q14919-2</id>
        <name>2</name>
        <sequence type="described" ref="VSP_012215"/>
    </isoform>
</comment>
<comment type="tissue specificity">
    <text evidence="3 4">Ubiquitous. Highly expressed in adult testis, heart, skeletal muscle, pancreas and brain, and in fetal brain, liver and kidney.</text>
</comment>
<comment type="PTM">
    <text evidence="3 4">Phosphorylation reduces DNA binding, but has no effect on heterodimerization and TBP binding.</text>
</comment>
<comment type="similarity">
    <text evidence="6">Belongs to the NC2 alpha/DRAP1 family.</text>
</comment>
<accession>Q14919</accession>
<accession>Q13448</accession>
<name>NC2A_HUMAN</name>
<reference key="1">
    <citation type="journal article" date="1996" name="EMBO J.">
        <title>A mechanism for repression of class II gene transcription through specific binding of NC2 to TBP-promoter complexes via heterodimeric histone fold domains.</title>
        <authorList>
            <person name="Goppelt A.R."/>
            <person name="Stelzer G."/>
            <person name="Lottspeich F."/>
            <person name="Meisterernst M."/>
        </authorList>
    </citation>
    <scope>NUCLEOTIDE SEQUENCE [MRNA] (ISOFORM 1)</scope>
    <scope>PROTEIN SEQUENCE OF 2-31</scope>
    <scope>FUNCTION</scope>
    <scope>PHOSPHORYLATION</scope>
    <scope>INTERACTION WITH DR1</scope>
    <scope>TISSUE SPECIFICITY</scope>
    <source>
        <tissue>B-cell</tissue>
    </source>
</reference>
<reference key="2">
    <citation type="journal article" date="1996" name="Genes Dev.">
        <title>Requirement of a corepressor for Dr1-mediated repression of transcription.</title>
        <authorList>
            <person name="Mermelstein F."/>
            <person name="Yeung K."/>
            <person name="Cao J."/>
            <person name="Inostroza J.A."/>
            <person name="Erdjument-Bromage H."/>
            <person name="Eagelson K."/>
            <person name="Landsman D."/>
            <person name="Levitt P."/>
            <person name="Tempst P."/>
            <person name="Reinberg D."/>
        </authorList>
    </citation>
    <scope>NUCLEOTIDE SEQUENCE [MRNA] (ISOFORMS 1 AND 2)</scope>
    <scope>PROTEIN SEQUENCE OF 20-26; 30-39 AND 72-91</scope>
    <scope>FUNCTION</scope>
    <scope>INTERACTION WITH DR1</scope>
    <scope>PHOSPHORYLATION</scope>
    <scope>TISSUE SPECIFICITY</scope>
    <source>
        <tissue>Cervix carcinoma</tissue>
    </source>
</reference>
<reference key="3">
    <citation type="journal article" date="2004" name="Genome Res.">
        <title>The status, quality, and expansion of the NIH full-length cDNA project: the Mammalian Gene Collection (MGC).</title>
        <authorList>
            <consortium name="The MGC Project Team"/>
        </authorList>
    </citation>
    <scope>NUCLEOTIDE SEQUENCE [LARGE SCALE MRNA] (ISOFORM 1)</scope>
    <source>
        <tissue>Muscle</tissue>
    </source>
</reference>
<reference key="4">
    <citation type="journal article" date="2004" name="Mol. Cell. Biol.">
        <title>NC2alpha interacts with BTAF1 and stimulates its ATP-dependent association with TATA-binding protein.</title>
        <authorList>
            <person name="Klejman M.P."/>
            <person name="Pereira L.A."/>
            <person name="van Zeeburg H.J.T."/>
            <person name="Gilfillan S."/>
            <person name="Meisterernst M."/>
            <person name="Timmers H.T.M."/>
        </authorList>
    </citation>
    <scope>INTERACTION WITH BTAF1</scope>
</reference>
<reference key="5">
    <citation type="journal article" date="2011" name="BMC Syst. Biol.">
        <title>Initial characterization of the human central proteome.</title>
        <authorList>
            <person name="Burkard T.R."/>
            <person name="Planyavsky M."/>
            <person name="Kaupe I."/>
            <person name="Breitwieser F.P."/>
            <person name="Buerckstuemmer T."/>
            <person name="Bennett K.L."/>
            <person name="Superti-Furga G."/>
            <person name="Colinge J."/>
        </authorList>
    </citation>
    <scope>IDENTIFICATION BY MASS SPECTROMETRY [LARGE SCALE ANALYSIS]</scope>
</reference>
<reference key="6">
    <citation type="journal article" date="2012" name="Proc. Natl. Acad. Sci. U.S.A.">
        <title>N-terminal acetylome analyses and functional insights of the N-terminal acetyltransferase NatB.</title>
        <authorList>
            <person name="Van Damme P."/>
            <person name="Lasa M."/>
            <person name="Polevoda B."/>
            <person name="Gazquez C."/>
            <person name="Elosegui-Artola A."/>
            <person name="Kim D.S."/>
            <person name="De Juan-Pardo E."/>
            <person name="Demeyer K."/>
            <person name="Hole K."/>
            <person name="Larrea E."/>
            <person name="Timmerman E."/>
            <person name="Prieto J."/>
            <person name="Arnesen T."/>
            <person name="Sherman F."/>
            <person name="Gevaert K."/>
            <person name="Aldabe R."/>
        </authorList>
    </citation>
    <scope>IDENTIFICATION BY MASS SPECTROMETRY [LARGE SCALE ANALYSIS]</scope>
</reference>
<reference key="7">
    <citation type="journal article" date="2001" name="Cell">
        <title>Crystal structure of negative cofactor 2 recognizing the TBP-DNA transcription complex.</title>
        <authorList>
            <person name="Kamada K."/>
            <person name="Shu F."/>
            <person name="Chen H."/>
            <person name="Malik S."/>
            <person name="Stelzer G."/>
            <person name="Roeder R.G."/>
            <person name="Meisterernst M."/>
            <person name="Burley S.K."/>
        </authorList>
    </citation>
    <scope>X-RAY CRYSTALLOGRAPHY (2.62 ANGSTROMS) OF 1-77 IN COMPLEX WITH DR1; TBP AND DNA</scope>
</reference>
<proteinExistence type="evidence at protein level"/>
<dbReference type="EMBL" id="X96506">
    <property type="protein sequence ID" value="CAA65358.1"/>
    <property type="molecule type" value="mRNA"/>
</dbReference>
<dbReference type="EMBL" id="U41843">
    <property type="protein sequence ID" value="AAB02192.1"/>
    <property type="molecule type" value="mRNA"/>
</dbReference>
<dbReference type="EMBL" id="BC010025">
    <property type="protein sequence ID" value="AAH10025.1"/>
    <property type="molecule type" value="mRNA"/>
</dbReference>
<dbReference type="CCDS" id="CCDS8123.1">
    <molecule id="Q14919-1"/>
</dbReference>
<dbReference type="PIR" id="S70618">
    <property type="entry name" value="S70618"/>
</dbReference>
<dbReference type="RefSeq" id="NP_006433.2">
    <molecule id="Q14919-1"/>
    <property type="nucleotide sequence ID" value="NM_006442.3"/>
</dbReference>
<dbReference type="PDB" id="1JFI">
    <property type="method" value="X-ray"/>
    <property type="resolution" value="2.62 A"/>
    <property type="chains" value="A=1-77"/>
</dbReference>
<dbReference type="PDBsum" id="1JFI"/>
<dbReference type="SMR" id="Q14919"/>
<dbReference type="BioGRID" id="115838">
    <property type="interactions" value="75"/>
</dbReference>
<dbReference type="ComplexPortal" id="CPX-642">
    <property type="entry name" value="Negative cofactor 2 transcriptional regulator complex"/>
</dbReference>
<dbReference type="CORUM" id="Q14919"/>
<dbReference type="FunCoup" id="Q14919">
    <property type="interactions" value="1493"/>
</dbReference>
<dbReference type="IntAct" id="Q14919">
    <property type="interactions" value="37"/>
</dbReference>
<dbReference type="MINT" id="Q14919"/>
<dbReference type="STRING" id="9606.ENSP00000307850"/>
<dbReference type="GlyGen" id="Q14919">
    <property type="glycosylation" value="1 site, 1 O-linked glycan (1 site)"/>
</dbReference>
<dbReference type="iPTMnet" id="Q14919"/>
<dbReference type="MetOSite" id="Q14919"/>
<dbReference type="PhosphoSitePlus" id="Q14919"/>
<dbReference type="SwissPalm" id="Q14919"/>
<dbReference type="BioMuta" id="DRAP1"/>
<dbReference type="DMDM" id="56404465"/>
<dbReference type="jPOST" id="Q14919"/>
<dbReference type="MassIVE" id="Q14919"/>
<dbReference type="PaxDb" id="9606-ENSP00000307850"/>
<dbReference type="PeptideAtlas" id="Q14919"/>
<dbReference type="ProteomicsDB" id="60220">
    <molecule id="Q14919-1"/>
</dbReference>
<dbReference type="ProteomicsDB" id="60221">
    <molecule id="Q14919-2"/>
</dbReference>
<dbReference type="Pumba" id="Q14919"/>
<dbReference type="Antibodypedia" id="1835">
    <property type="antibodies" value="187 antibodies from 24 providers"/>
</dbReference>
<dbReference type="DNASU" id="10589"/>
<dbReference type="Ensembl" id="ENST00000312515.7">
    <molecule id="Q14919-1"/>
    <property type="protein sequence ID" value="ENSP00000307850.2"/>
    <property type="gene ID" value="ENSG00000175550.8"/>
</dbReference>
<dbReference type="GeneID" id="10589"/>
<dbReference type="KEGG" id="hsa:10589"/>
<dbReference type="MANE-Select" id="ENST00000312515.7">
    <property type="protein sequence ID" value="ENSP00000307850.2"/>
    <property type="RefSeq nucleotide sequence ID" value="NM_006442.4"/>
    <property type="RefSeq protein sequence ID" value="NP_006433.2"/>
</dbReference>
<dbReference type="UCSC" id="uc001ogj.3">
    <molecule id="Q14919-1"/>
    <property type="organism name" value="human"/>
</dbReference>
<dbReference type="AGR" id="HGNC:3019"/>
<dbReference type="CTD" id="10589"/>
<dbReference type="GeneCards" id="DRAP1"/>
<dbReference type="HGNC" id="HGNC:3019">
    <property type="gene designation" value="DRAP1"/>
</dbReference>
<dbReference type="HPA" id="ENSG00000175550">
    <property type="expression patterns" value="Low tissue specificity"/>
</dbReference>
<dbReference type="MIM" id="602289">
    <property type="type" value="gene"/>
</dbReference>
<dbReference type="neXtProt" id="NX_Q14919"/>
<dbReference type="OpenTargets" id="ENSG00000175550"/>
<dbReference type="PharmGKB" id="PA27476"/>
<dbReference type="VEuPathDB" id="HostDB:ENSG00000175550"/>
<dbReference type="eggNOG" id="KOG1659">
    <property type="taxonomic scope" value="Eukaryota"/>
</dbReference>
<dbReference type="GeneTree" id="ENSGT00390000012424"/>
<dbReference type="HOGENOM" id="CLU_045277_10_0_1"/>
<dbReference type="InParanoid" id="Q14919"/>
<dbReference type="OMA" id="TEVEPAH"/>
<dbReference type="OrthoDB" id="653904at2759"/>
<dbReference type="PAN-GO" id="Q14919">
    <property type="GO annotations" value="9 GO annotations based on evolutionary models"/>
</dbReference>
<dbReference type="PhylomeDB" id="Q14919"/>
<dbReference type="TreeFam" id="TF313964"/>
<dbReference type="PathwayCommons" id="Q14919"/>
<dbReference type="Reactome" id="R-HSA-1181150">
    <property type="pathway name" value="Signaling by NODAL"/>
</dbReference>
<dbReference type="Reactome" id="R-HSA-1502540">
    <property type="pathway name" value="Signaling by Activin"/>
</dbReference>
<dbReference type="SignaLink" id="Q14919"/>
<dbReference type="SIGNOR" id="Q14919"/>
<dbReference type="BioGRID-ORCS" id="10589">
    <property type="hits" value="293 hits in 1161 CRISPR screens"/>
</dbReference>
<dbReference type="ChiTaRS" id="DRAP1">
    <property type="organism name" value="human"/>
</dbReference>
<dbReference type="EvolutionaryTrace" id="Q14919"/>
<dbReference type="GeneWiki" id="DRAP1"/>
<dbReference type="GenomeRNAi" id="10589"/>
<dbReference type="Pharos" id="Q14919">
    <property type="development level" value="Tbio"/>
</dbReference>
<dbReference type="PRO" id="PR:Q14919"/>
<dbReference type="Proteomes" id="UP000005640">
    <property type="component" value="Chromosome 11"/>
</dbReference>
<dbReference type="RNAct" id="Q14919">
    <property type="molecule type" value="protein"/>
</dbReference>
<dbReference type="Bgee" id="ENSG00000175550">
    <property type="expression patterns" value="Expressed in left testis and 192 other cell types or tissues"/>
</dbReference>
<dbReference type="ExpressionAtlas" id="Q14919">
    <property type="expression patterns" value="baseline and differential"/>
</dbReference>
<dbReference type="GO" id="GO:0017054">
    <property type="term" value="C:negative cofactor 2 complex"/>
    <property type="evidence" value="ECO:0000318"/>
    <property type="project" value="GO_Central"/>
</dbReference>
<dbReference type="GO" id="GO:0005634">
    <property type="term" value="C:nucleus"/>
    <property type="evidence" value="ECO:0000318"/>
    <property type="project" value="GO_Central"/>
</dbReference>
<dbReference type="GO" id="GO:0090575">
    <property type="term" value="C:RNA polymerase II transcription regulator complex"/>
    <property type="evidence" value="ECO:0000314"/>
    <property type="project" value="ARUK-UCL"/>
</dbReference>
<dbReference type="GO" id="GO:0001046">
    <property type="term" value="F:core promoter sequence-specific DNA binding"/>
    <property type="evidence" value="ECO:0000318"/>
    <property type="project" value="GO_Central"/>
</dbReference>
<dbReference type="GO" id="GO:0042802">
    <property type="term" value="F:identical protein binding"/>
    <property type="evidence" value="ECO:0000353"/>
    <property type="project" value="IntAct"/>
</dbReference>
<dbReference type="GO" id="GO:0046982">
    <property type="term" value="F:protein heterodimerization activity"/>
    <property type="evidence" value="ECO:0007669"/>
    <property type="project" value="InterPro"/>
</dbReference>
<dbReference type="GO" id="GO:0016251">
    <property type="term" value="F:RNA polymerase II general transcription initiation factor activity"/>
    <property type="evidence" value="ECO:0000314"/>
    <property type="project" value="ARUK-UCL"/>
</dbReference>
<dbReference type="GO" id="GO:0001091">
    <property type="term" value="F:RNA polymerase II general transcription initiation factor binding"/>
    <property type="evidence" value="ECO:0000314"/>
    <property type="project" value="ARUK-UCL"/>
</dbReference>
<dbReference type="GO" id="GO:0017025">
    <property type="term" value="F:TBP-class protein binding"/>
    <property type="evidence" value="ECO:0000353"/>
    <property type="project" value="ARUK-UCL"/>
</dbReference>
<dbReference type="GO" id="GO:0000122">
    <property type="term" value="P:negative regulation of transcription by RNA polymerase II"/>
    <property type="evidence" value="ECO:0000314"/>
    <property type="project" value="ARUK-UCL"/>
</dbReference>
<dbReference type="GO" id="GO:0006366">
    <property type="term" value="P:transcription by RNA polymerase II"/>
    <property type="evidence" value="ECO:0000318"/>
    <property type="project" value="GO_Central"/>
</dbReference>
<dbReference type="CDD" id="cd22906">
    <property type="entry name" value="HFD_DRAP1"/>
    <property type="match status" value="1"/>
</dbReference>
<dbReference type="FunFam" id="1.10.20.10:FF:000032">
    <property type="entry name" value="dr1-associated corepressor isoform X1"/>
    <property type="match status" value="1"/>
</dbReference>
<dbReference type="Gene3D" id="1.10.20.10">
    <property type="entry name" value="Histone, subunit A"/>
    <property type="match status" value="1"/>
</dbReference>
<dbReference type="IDEAL" id="IID00385"/>
<dbReference type="InterPro" id="IPR003958">
    <property type="entry name" value="CBFA_NFYB_domain"/>
</dbReference>
<dbReference type="InterPro" id="IPR009072">
    <property type="entry name" value="Histone-fold"/>
</dbReference>
<dbReference type="InterPro" id="IPR050568">
    <property type="entry name" value="Transcr_DNA_Rep_Reg"/>
</dbReference>
<dbReference type="PANTHER" id="PTHR10252:SF5">
    <property type="entry name" value="DR1-ASSOCIATED COREPRESSOR"/>
    <property type="match status" value="1"/>
</dbReference>
<dbReference type="PANTHER" id="PTHR10252">
    <property type="entry name" value="HISTONE-LIKE TRANSCRIPTION FACTOR CCAAT-RELATED"/>
    <property type="match status" value="1"/>
</dbReference>
<dbReference type="Pfam" id="PF00808">
    <property type="entry name" value="CBFD_NFYB_HMF"/>
    <property type="match status" value="1"/>
</dbReference>
<dbReference type="SUPFAM" id="SSF47113">
    <property type="entry name" value="Histone-fold"/>
    <property type="match status" value="1"/>
</dbReference>
<gene>
    <name type="primary">DRAP1</name>
</gene>
<organism>
    <name type="scientific">Homo sapiens</name>
    <name type="common">Human</name>
    <dbReference type="NCBI Taxonomy" id="9606"/>
    <lineage>
        <taxon>Eukaryota</taxon>
        <taxon>Metazoa</taxon>
        <taxon>Chordata</taxon>
        <taxon>Craniata</taxon>
        <taxon>Vertebrata</taxon>
        <taxon>Euteleostomi</taxon>
        <taxon>Mammalia</taxon>
        <taxon>Eutheria</taxon>
        <taxon>Euarchontoglires</taxon>
        <taxon>Primates</taxon>
        <taxon>Haplorrhini</taxon>
        <taxon>Catarrhini</taxon>
        <taxon>Hominidae</taxon>
        <taxon>Homo</taxon>
    </lineage>
</organism>
<sequence length="205" mass="22350">MPSKKKKYNARFPPARIKKIMQTDEEIGKVAAAVPVIISRALELFLESLLKKACQVTQSRNAKTMTTSHLKQCIELEQQFDFLKDLVASVPDMQGDGEDNHMDGDKGARRGRKPGSGGRKNGGMGTKSKDKKLSGTDSEQEDESEDTDTDGEEETSQPPPQASHPSAHFQSPPTPFLPFASTLPLPPAPPGPSAPDEEDEEDYDS</sequence>
<protein>
    <recommendedName>
        <fullName>Dr1-associated corepressor</fullName>
    </recommendedName>
    <alternativeName>
        <fullName>Dr1-associated protein 1</fullName>
    </alternativeName>
    <alternativeName>
        <fullName>Negative cofactor 2-alpha</fullName>
        <shortName>NC2-alpha</shortName>
    </alternativeName>
</protein>